<protein>
    <recommendedName>
        <fullName evidence="1">Chaperonin GroEL</fullName>
        <ecNumber evidence="1">5.6.1.7</ecNumber>
    </recommendedName>
    <alternativeName>
        <fullName evidence="1">60 kDa chaperonin</fullName>
    </alternativeName>
    <alternativeName>
        <fullName evidence="1">Chaperonin-60</fullName>
        <shortName evidence="1">Cpn60</shortName>
    </alternativeName>
</protein>
<organism>
    <name type="scientific">Coxiella burnetii (strain CbuG_Q212)</name>
    <name type="common">Coxiella burnetii (strain Q212)</name>
    <dbReference type="NCBI Taxonomy" id="434923"/>
    <lineage>
        <taxon>Bacteria</taxon>
        <taxon>Pseudomonadati</taxon>
        <taxon>Pseudomonadota</taxon>
        <taxon>Gammaproteobacteria</taxon>
        <taxon>Legionellales</taxon>
        <taxon>Coxiellaceae</taxon>
        <taxon>Coxiella</taxon>
    </lineage>
</organism>
<evidence type="ECO:0000255" key="1">
    <source>
        <dbReference type="HAMAP-Rule" id="MF_00600"/>
    </source>
</evidence>
<proteinExistence type="inferred from homology"/>
<name>CH60_COXB2</name>
<sequence>MAAKVLKFSHEVLHAMSRGVEVLANAVKVTLGPKGRNVVLDKSFGAPTITKDGVSVAKEIELEDKFENMGAQMVKEVASRTSDDAGDGTTTATVLAQAILVEGIKAVIAGMNPMDLKRGIDKAVTAAVAELKKISKPCKDQKAIAQVGTISANSDKSIGDIIAEAMEKVGKEGVITVEDGSGLENALEVVEGMQFDRGYLSPYFINNQQNMSAELENPFILLVDKKISNIRELIPLLENVAKSGRPLLVIAEDIEGEALATLVVNNIRGVVKVAAVKAPGFGDRRKAMLQDIAVLTGGKVISEEVGLSLEAASLDDLGSAKRVVVTKDDTTIIDGSGDAGDIKNRVEQIRKEIENSSSDYDKEKLQERLAKLAGGVAVIKVGAATEVEMKEKKARVEDALHATRAAVEEGVVPGGGVALIRVLKSLDSVEVENEDQRVGVEIARRAMAYPLSQIVKNTGVQAAVVADKVLNHKDVNYGYNAATGEYGDMIEMGILDPTKVTRTALQNAASIAGLMITTECMVTEAPKKKEESMPGGGDMGGMGGMGGMGGMM</sequence>
<gene>
    <name evidence="1" type="primary">groEL</name>
    <name evidence="1" type="synonym">groL</name>
    <name type="ordered locus">CbuG_0099</name>
</gene>
<reference key="1">
    <citation type="journal article" date="2009" name="Infect. Immun.">
        <title>Comparative genomics reveal extensive transposon-mediated genomic plasticity and diversity among potential effector proteins within the genus Coxiella.</title>
        <authorList>
            <person name="Beare P.A."/>
            <person name="Unsworth N."/>
            <person name="Andoh M."/>
            <person name="Voth D.E."/>
            <person name="Omsland A."/>
            <person name="Gilk S.D."/>
            <person name="Williams K.P."/>
            <person name="Sobral B.W."/>
            <person name="Kupko J.J. III"/>
            <person name="Porcella S.F."/>
            <person name="Samuel J.E."/>
            <person name="Heinzen R.A."/>
        </authorList>
    </citation>
    <scope>NUCLEOTIDE SEQUENCE [LARGE SCALE GENOMIC DNA]</scope>
    <source>
        <strain>CbuG_Q212</strain>
    </source>
</reference>
<comment type="function">
    <text evidence="1">Together with its co-chaperonin GroES, plays an essential role in assisting protein folding. The GroEL-GroES system forms a nano-cage that allows encapsulation of the non-native substrate proteins and provides a physical environment optimized to promote and accelerate protein folding.</text>
</comment>
<comment type="catalytic activity">
    <reaction evidence="1">
        <text>ATP + H2O + a folded polypeptide = ADP + phosphate + an unfolded polypeptide.</text>
        <dbReference type="EC" id="5.6.1.7"/>
    </reaction>
</comment>
<comment type="subunit">
    <text evidence="1">Forms a cylinder of 14 subunits composed of two heptameric rings stacked back-to-back. Interacts with the co-chaperonin GroES.</text>
</comment>
<comment type="subcellular location">
    <subcellularLocation>
        <location evidence="1">Cytoplasm</location>
    </subcellularLocation>
</comment>
<comment type="similarity">
    <text evidence="1">Belongs to the chaperonin (HSP60) family.</text>
</comment>
<keyword id="KW-0067">ATP-binding</keyword>
<keyword id="KW-0143">Chaperone</keyword>
<keyword id="KW-0963">Cytoplasm</keyword>
<keyword id="KW-0413">Isomerase</keyword>
<keyword id="KW-0547">Nucleotide-binding</keyword>
<accession>B6J2I0</accession>
<dbReference type="EC" id="5.6.1.7" evidence="1"/>
<dbReference type="EMBL" id="CP001019">
    <property type="protein sequence ID" value="ACJ17554.1"/>
    <property type="molecule type" value="Genomic_DNA"/>
</dbReference>
<dbReference type="RefSeq" id="WP_005770500.1">
    <property type="nucleotide sequence ID" value="NC_011527.1"/>
</dbReference>
<dbReference type="SMR" id="B6J2I0"/>
<dbReference type="KEGG" id="cbg:CbuG_0099"/>
<dbReference type="HOGENOM" id="CLU_016503_3_0_6"/>
<dbReference type="GO" id="GO:0005737">
    <property type="term" value="C:cytoplasm"/>
    <property type="evidence" value="ECO:0007669"/>
    <property type="project" value="UniProtKB-SubCell"/>
</dbReference>
<dbReference type="GO" id="GO:0005524">
    <property type="term" value="F:ATP binding"/>
    <property type="evidence" value="ECO:0007669"/>
    <property type="project" value="UniProtKB-UniRule"/>
</dbReference>
<dbReference type="GO" id="GO:0140662">
    <property type="term" value="F:ATP-dependent protein folding chaperone"/>
    <property type="evidence" value="ECO:0007669"/>
    <property type="project" value="InterPro"/>
</dbReference>
<dbReference type="GO" id="GO:0016853">
    <property type="term" value="F:isomerase activity"/>
    <property type="evidence" value="ECO:0007669"/>
    <property type="project" value="UniProtKB-KW"/>
</dbReference>
<dbReference type="GO" id="GO:0051082">
    <property type="term" value="F:unfolded protein binding"/>
    <property type="evidence" value="ECO:0007669"/>
    <property type="project" value="UniProtKB-UniRule"/>
</dbReference>
<dbReference type="GO" id="GO:0042026">
    <property type="term" value="P:protein refolding"/>
    <property type="evidence" value="ECO:0007669"/>
    <property type="project" value="UniProtKB-UniRule"/>
</dbReference>
<dbReference type="CDD" id="cd03344">
    <property type="entry name" value="GroEL"/>
    <property type="match status" value="1"/>
</dbReference>
<dbReference type="FunFam" id="1.10.560.10:FF:000001">
    <property type="entry name" value="60 kDa chaperonin"/>
    <property type="match status" value="1"/>
</dbReference>
<dbReference type="FunFam" id="3.50.7.10:FF:000001">
    <property type="entry name" value="60 kDa chaperonin"/>
    <property type="match status" value="1"/>
</dbReference>
<dbReference type="Gene3D" id="3.50.7.10">
    <property type="entry name" value="GroEL"/>
    <property type="match status" value="1"/>
</dbReference>
<dbReference type="Gene3D" id="1.10.560.10">
    <property type="entry name" value="GroEL-like equatorial domain"/>
    <property type="match status" value="1"/>
</dbReference>
<dbReference type="Gene3D" id="3.30.260.10">
    <property type="entry name" value="TCP-1-like chaperonin intermediate domain"/>
    <property type="match status" value="1"/>
</dbReference>
<dbReference type="HAMAP" id="MF_00600">
    <property type="entry name" value="CH60"/>
    <property type="match status" value="1"/>
</dbReference>
<dbReference type="InterPro" id="IPR018370">
    <property type="entry name" value="Chaperonin_Cpn60_CS"/>
</dbReference>
<dbReference type="InterPro" id="IPR001844">
    <property type="entry name" value="Cpn60/GroEL"/>
</dbReference>
<dbReference type="InterPro" id="IPR002423">
    <property type="entry name" value="Cpn60/GroEL/TCP-1"/>
</dbReference>
<dbReference type="InterPro" id="IPR027409">
    <property type="entry name" value="GroEL-like_apical_dom_sf"/>
</dbReference>
<dbReference type="InterPro" id="IPR027413">
    <property type="entry name" value="GROEL-like_equatorial_sf"/>
</dbReference>
<dbReference type="InterPro" id="IPR027410">
    <property type="entry name" value="TCP-1-like_intermed_sf"/>
</dbReference>
<dbReference type="NCBIfam" id="TIGR02348">
    <property type="entry name" value="GroEL"/>
    <property type="match status" value="1"/>
</dbReference>
<dbReference type="NCBIfam" id="NF000592">
    <property type="entry name" value="PRK00013.1"/>
    <property type="match status" value="1"/>
</dbReference>
<dbReference type="NCBIfam" id="NF009487">
    <property type="entry name" value="PRK12849.1"/>
    <property type="match status" value="1"/>
</dbReference>
<dbReference type="NCBIfam" id="NF009488">
    <property type="entry name" value="PRK12850.1"/>
    <property type="match status" value="1"/>
</dbReference>
<dbReference type="NCBIfam" id="NF009489">
    <property type="entry name" value="PRK12851.1"/>
    <property type="match status" value="1"/>
</dbReference>
<dbReference type="PANTHER" id="PTHR45633">
    <property type="entry name" value="60 KDA HEAT SHOCK PROTEIN, MITOCHONDRIAL"/>
    <property type="match status" value="1"/>
</dbReference>
<dbReference type="Pfam" id="PF00118">
    <property type="entry name" value="Cpn60_TCP1"/>
    <property type="match status" value="1"/>
</dbReference>
<dbReference type="PRINTS" id="PR00298">
    <property type="entry name" value="CHAPERONIN60"/>
</dbReference>
<dbReference type="SUPFAM" id="SSF52029">
    <property type="entry name" value="GroEL apical domain-like"/>
    <property type="match status" value="1"/>
</dbReference>
<dbReference type="SUPFAM" id="SSF48592">
    <property type="entry name" value="GroEL equatorial domain-like"/>
    <property type="match status" value="1"/>
</dbReference>
<dbReference type="SUPFAM" id="SSF54849">
    <property type="entry name" value="GroEL-intermediate domain like"/>
    <property type="match status" value="1"/>
</dbReference>
<dbReference type="PROSITE" id="PS00296">
    <property type="entry name" value="CHAPERONINS_CPN60"/>
    <property type="match status" value="1"/>
</dbReference>
<feature type="chain" id="PRO_1000129998" description="Chaperonin GroEL">
    <location>
        <begin position="1"/>
        <end position="552"/>
    </location>
</feature>
<feature type="binding site" evidence="1">
    <location>
        <begin position="30"/>
        <end position="33"/>
    </location>
    <ligand>
        <name>ATP</name>
        <dbReference type="ChEBI" id="CHEBI:30616"/>
    </ligand>
</feature>
<feature type="binding site" evidence="1">
    <location>
        <position position="51"/>
    </location>
    <ligand>
        <name>ATP</name>
        <dbReference type="ChEBI" id="CHEBI:30616"/>
    </ligand>
</feature>
<feature type="binding site" evidence="1">
    <location>
        <begin position="87"/>
        <end position="91"/>
    </location>
    <ligand>
        <name>ATP</name>
        <dbReference type="ChEBI" id="CHEBI:30616"/>
    </ligand>
</feature>
<feature type="binding site" evidence="1">
    <location>
        <position position="415"/>
    </location>
    <ligand>
        <name>ATP</name>
        <dbReference type="ChEBI" id="CHEBI:30616"/>
    </ligand>
</feature>
<feature type="binding site" evidence="1">
    <location>
        <begin position="480"/>
        <end position="482"/>
    </location>
    <ligand>
        <name>ATP</name>
        <dbReference type="ChEBI" id="CHEBI:30616"/>
    </ligand>
</feature>
<feature type="binding site" evidence="1">
    <location>
        <position position="496"/>
    </location>
    <ligand>
        <name>ATP</name>
        <dbReference type="ChEBI" id="CHEBI:30616"/>
    </ligand>
</feature>